<keyword id="KW-0002">3D-structure</keyword>
<keyword id="KW-0012">Acyltransferase</keyword>
<keyword id="KW-1185">Reference proteome</keyword>
<keyword id="KW-0808">Transferase</keyword>
<proteinExistence type="evidence at protein level"/>
<evidence type="ECO:0000255" key="1">
    <source>
        <dbReference type="PROSITE-ProRule" id="PRU00532"/>
    </source>
</evidence>
<evidence type="ECO:0000269" key="2">
    <source>
    </source>
</evidence>
<evidence type="ECO:0007829" key="3">
    <source>
        <dbReference type="PDB" id="4RI1"/>
    </source>
</evidence>
<protein>
    <recommendedName>
        <fullName>UDP-4-amino-4,6-dideoxy-N-acetyl-beta-L-altrosamine N-acetyltransferase</fullName>
        <ecNumber>2.3.1.202</ecNumber>
    </recommendedName>
    <alternativeName>
        <fullName>Pseudaminic acid biosynthesis protein H</fullName>
    </alternativeName>
</protein>
<comment type="function">
    <text evidence="2">Catalyzes the third step in the biosynthesis of pseudaminic acid, a sialic-acid-like sugar that is used to modify flagellin. Mediates N-4 acetylation of UDP-4-amino-4,6-dideoxy-beta-L-AltNAc to form UDP-2,4-diacetamido-2,4,6-trideoxy-beta-L-altropyranose.</text>
</comment>
<comment type="catalytic activity">
    <reaction evidence="2">
        <text>UDP-4-amino-4,6-dideoxy-N-acetyl-beta-L-altrosamine + acetyl-CoA = UDP-2,4-diacetamido-2,4,6-trideoxy-beta-L-altrose + CoA + H(+)</text>
        <dbReference type="Rhea" id="RHEA:34155"/>
        <dbReference type="ChEBI" id="CHEBI:15378"/>
        <dbReference type="ChEBI" id="CHEBI:57287"/>
        <dbReference type="ChEBI" id="CHEBI:57288"/>
        <dbReference type="ChEBI" id="CHEBI:63389"/>
        <dbReference type="ChEBI" id="CHEBI:63417"/>
        <dbReference type="EC" id="2.3.1.202"/>
    </reaction>
</comment>
<organism>
    <name type="scientific">Helicobacter pylori (strain ATCC 700392 / 26695)</name>
    <name type="common">Campylobacter pylori</name>
    <dbReference type="NCBI Taxonomy" id="85962"/>
    <lineage>
        <taxon>Bacteria</taxon>
        <taxon>Pseudomonadati</taxon>
        <taxon>Campylobacterota</taxon>
        <taxon>Epsilonproteobacteria</taxon>
        <taxon>Campylobacterales</taxon>
        <taxon>Helicobacteraceae</taxon>
        <taxon>Helicobacter</taxon>
    </lineage>
</organism>
<accession>O25094</accession>
<sequence>MKKNYSYKNIQAIDFTNLNDGEKLLVLEFRNHPNTALWMYSTFISLKTHLQFIEDLKNSPNHRYFLFKEEGVYLGVGSITKINFFHKHGYLGIYKNPFLKNGGETILKALEFIAFEEFQLHSLHLEVMENNFKAIAFYEKNHYELEGRLKGFISKDKEFIDVLLYYKDKKGYNDQSLLKL</sequence>
<name>PSEH_HELPY</name>
<dbReference type="EC" id="2.3.1.202"/>
<dbReference type="EMBL" id="AE000511">
    <property type="protein sequence ID" value="AAD07394.1"/>
    <property type="molecule type" value="Genomic_DNA"/>
</dbReference>
<dbReference type="PIR" id="G64560">
    <property type="entry name" value="G64560"/>
</dbReference>
<dbReference type="RefSeq" id="NP_207125.1">
    <property type="nucleotide sequence ID" value="NC_000915.1"/>
</dbReference>
<dbReference type="RefSeq" id="WP_000742697.1">
    <property type="nucleotide sequence ID" value="NC_018939.1"/>
</dbReference>
<dbReference type="PDB" id="4RI1">
    <property type="method" value="X-ray"/>
    <property type="resolution" value="2.30 A"/>
    <property type="chains" value="A/B/C=1-180"/>
</dbReference>
<dbReference type="PDBsum" id="4RI1"/>
<dbReference type="SMR" id="O25094"/>
<dbReference type="DIP" id="DIP-3555N"/>
<dbReference type="IntAct" id="O25094">
    <property type="interactions" value="4"/>
</dbReference>
<dbReference type="MINT" id="O25094"/>
<dbReference type="STRING" id="85962.HP_0327"/>
<dbReference type="PaxDb" id="85962-C694_01655"/>
<dbReference type="DNASU" id="900098"/>
<dbReference type="EnsemblBacteria" id="AAD07394">
    <property type="protein sequence ID" value="AAD07394"/>
    <property type="gene ID" value="HP_0327"/>
</dbReference>
<dbReference type="KEGG" id="heo:C694_01655"/>
<dbReference type="KEGG" id="hpy:HP_0327"/>
<dbReference type="PATRIC" id="fig|85962.8.peg.341"/>
<dbReference type="eggNOG" id="COG1670">
    <property type="taxonomic scope" value="Bacteria"/>
</dbReference>
<dbReference type="InParanoid" id="O25094"/>
<dbReference type="OrthoDB" id="5330177at2"/>
<dbReference type="PhylomeDB" id="O25094"/>
<dbReference type="BioCyc" id="MetaCyc:HP0327-MONOMER"/>
<dbReference type="BRENDA" id="2.3.1.202">
    <property type="organism ID" value="2604"/>
</dbReference>
<dbReference type="EvolutionaryTrace" id="O25094"/>
<dbReference type="Proteomes" id="UP000000429">
    <property type="component" value="Chromosome"/>
</dbReference>
<dbReference type="GO" id="GO:0016747">
    <property type="term" value="F:acyltransferase activity, transferring groups other than amino-acyl groups"/>
    <property type="evidence" value="ECO:0007669"/>
    <property type="project" value="InterPro"/>
</dbReference>
<dbReference type="Gene3D" id="3.40.630.30">
    <property type="match status" value="1"/>
</dbReference>
<dbReference type="InterPro" id="IPR016181">
    <property type="entry name" value="Acyl_CoA_acyltransferase"/>
</dbReference>
<dbReference type="InterPro" id="IPR000182">
    <property type="entry name" value="GNAT_dom"/>
</dbReference>
<dbReference type="InterPro" id="IPR020036">
    <property type="entry name" value="PseH"/>
</dbReference>
<dbReference type="NCBIfam" id="TIGR03585">
    <property type="entry name" value="PseH"/>
    <property type="match status" value="1"/>
</dbReference>
<dbReference type="Pfam" id="PF00583">
    <property type="entry name" value="Acetyltransf_1"/>
    <property type="match status" value="1"/>
</dbReference>
<dbReference type="SUPFAM" id="SSF55729">
    <property type="entry name" value="Acyl-CoA N-acyltransferases (Nat)"/>
    <property type="match status" value="1"/>
</dbReference>
<dbReference type="PROSITE" id="PS51186">
    <property type="entry name" value="GNAT"/>
    <property type="match status" value="1"/>
</dbReference>
<feature type="chain" id="PRO_0000418961" description="UDP-4-amino-4,6-dideoxy-N-acetyl-beta-L-altrosamine N-acetyltransferase">
    <location>
        <begin position="1"/>
        <end position="180"/>
    </location>
</feature>
<feature type="domain" description="N-acetyltransferase" evidence="1">
    <location>
        <begin position="13"/>
        <end position="169"/>
    </location>
</feature>
<feature type="strand" evidence="3">
    <location>
        <begin position="5"/>
        <end position="7"/>
    </location>
</feature>
<feature type="strand" evidence="3">
    <location>
        <begin position="10"/>
        <end position="14"/>
    </location>
</feature>
<feature type="helix" evidence="3">
    <location>
        <begin position="15"/>
        <end position="17"/>
    </location>
</feature>
<feature type="helix" evidence="3">
    <location>
        <begin position="20"/>
        <end position="31"/>
    </location>
</feature>
<feature type="helix" evidence="3">
    <location>
        <begin position="33"/>
        <end position="36"/>
    </location>
</feature>
<feature type="strand" evidence="3">
    <location>
        <begin position="39"/>
        <end position="42"/>
    </location>
</feature>
<feature type="helix" evidence="3">
    <location>
        <begin position="46"/>
        <end position="56"/>
    </location>
</feature>
<feature type="strand" evidence="3">
    <location>
        <begin position="63"/>
        <end position="69"/>
    </location>
</feature>
<feature type="strand" evidence="3">
    <location>
        <begin position="72"/>
        <end position="83"/>
    </location>
</feature>
<feature type="turn" evidence="3">
    <location>
        <begin position="84"/>
        <end position="87"/>
    </location>
</feature>
<feature type="strand" evidence="3">
    <location>
        <begin position="88"/>
        <end position="95"/>
    </location>
</feature>
<feature type="helix" evidence="3">
    <location>
        <begin position="103"/>
        <end position="115"/>
    </location>
</feature>
<feature type="strand" evidence="3">
    <location>
        <begin position="121"/>
        <end position="128"/>
    </location>
</feature>
<feature type="helix" evidence="3">
    <location>
        <begin position="132"/>
        <end position="140"/>
    </location>
</feature>
<feature type="strand" evidence="3">
    <location>
        <begin position="144"/>
        <end position="155"/>
    </location>
</feature>
<feature type="strand" evidence="3">
    <location>
        <begin position="158"/>
        <end position="168"/>
    </location>
</feature>
<feature type="helix" evidence="3">
    <location>
        <begin position="169"/>
        <end position="177"/>
    </location>
</feature>
<gene>
    <name type="primary">pseH</name>
    <name type="ordered locus">HP_0327</name>
</gene>
<reference key="1">
    <citation type="journal article" date="1997" name="Nature">
        <title>The complete genome sequence of the gastric pathogen Helicobacter pylori.</title>
        <authorList>
            <person name="Tomb J.-F."/>
            <person name="White O."/>
            <person name="Kerlavage A.R."/>
            <person name="Clayton R.A."/>
            <person name="Sutton G.G."/>
            <person name="Fleischmann R.D."/>
            <person name="Ketchum K.A."/>
            <person name="Klenk H.-P."/>
            <person name="Gill S.R."/>
            <person name="Dougherty B.A."/>
            <person name="Nelson K.E."/>
            <person name="Quackenbush J."/>
            <person name="Zhou L."/>
            <person name="Kirkness E.F."/>
            <person name="Peterson S.N."/>
            <person name="Loftus B.J."/>
            <person name="Richardson D.L."/>
            <person name="Dodson R.J."/>
            <person name="Khalak H.G."/>
            <person name="Glodek A."/>
            <person name="McKenney K."/>
            <person name="FitzGerald L.M."/>
            <person name="Lee N."/>
            <person name="Adams M.D."/>
            <person name="Hickey E.K."/>
            <person name="Berg D.E."/>
            <person name="Gocayne J.D."/>
            <person name="Utterback T.R."/>
            <person name="Peterson J.D."/>
            <person name="Kelley J.M."/>
            <person name="Cotton M.D."/>
            <person name="Weidman J.F."/>
            <person name="Fujii C."/>
            <person name="Bowman C."/>
            <person name="Watthey L."/>
            <person name="Wallin E."/>
            <person name="Hayes W.S."/>
            <person name="Borodovsky M."/>
            <person name="Karp P.D."/>
            <person name="Smith H.O."/>
            <person name="Fraser C.M."/>
            <person name="Venter J.C."/>
        </authorList>
    </citation>
    <scope>NUCLEOTIDE SEQUENCE [LARGE SCALE GENOMIC DNA]</scope>
    <source>
        <strain>ATCC 700392 / 26695</strain>
    </source>
</reference>
<reference key="2">
    <citation type="journal article" date="2006" name="Glycobiology">
        <title>Elucidation of the CMP-pseudaminic acid pathway in Helicobacter pylori: synthesis from UDP-N-acetylglucosamine by a single enzymatic reaction.</title>
        <authorList>
            <person name="Schoenhofen I.C."/>
            <person name="McNally D.J."/>
            <person name="Brisson J.R."/>
            <person name="Logan S.M."/>
        </authorList>
    </citation>
    <scope>FUNCTION</scope>
    <scope>CATALYTIC ACTIVITY</scope>
    <scope>PATHWAY</scope>
    <source>
        <strain>ATCC 700392 / 26695</strain>
    </source>
</reference>